<evidence type="ECO:0000255" key="1">
    <source>
        <dbReference type="HAMAP-Rule" id="MF_00605"/>
    </source>
</evidence>
<dbReference type="EC" id="2.1.1.228" evidence="1"/>
<dbReference type="EMBL" id="CU928162">
    <property type="protein sequence ID" value="CAR09066.1"/>
    <property type="molecule type" value="Genomic_DNA"/>
</dbReference>
<dbReference type="RefSeq" id="WP_000264773.1">
    <property type="nucleotide sequence ID" value="NC_011745.1"/>
</dbReference>
<dbReference type="SMR" id="B7MYA0"/>
<dbReference type="KEGG" id="ecq:ECED1_3046"/>
<dbReference type="HOGENOM" id="CLU_047363_0_1_6"/>
<dbReference type="Proteomes" id="UP000000748">
    <property type="component" value="Chromosome"/>
</dbReference>
<dbReference type="GO" id="GO:0005829">
    <property type="term" value="C:cytosol"/>
    <property type="evidence" value="ECO:0007669"/>
    <property type="project" value="TreeGrafter"/>
</dbReference>
<dbReference type="GO" id="GO:0052906">
    <property type="term" value="F:tRNA (guanine(37)-N1)-methyltransferase activity"/>
    <property type="evidence" value="ECO:0007669"/>
    <property type="project" value="UniProtKB-UniRule"/>
</dbReference>
<dbReference type="GO" id="GO:0002939">
    <property type="term" value="P:tRNA N1-guanine methylation"/>
    <property type="evidence" value="ECO:0007669"/>
    <property type="project" value="TreeGrafter"/>
</dbReference>
<dbReference type="CDD" id="cd18080">
    <property type="entry name" value="TrmD-like"/>
    <property type="match status" value="1"/>
</dbReference>
<dbReference type="FunFam" id="1.10.1270.20:FF:000001">
    <property type="entry name" value="tRNA (guanine-N(1)-)-methyltransferase"/>
    <property type="match status" value="1"/>
</dbReference>
<dbReference type="FunFam" id="3.40.1280.10:FF:000001">
    <property type="entry name" value="tRNA (guanine-N(1)-)-methyltransferase"/>
    <property type="match status" value="1"/>
</dbReference>
<dbReference type="Gene3D" id="3.40.1280.10">
    <property type="match status" value="1"/>
</dbReference>
<dbReference type="Gene3D" id="1.10.1270.20">
    <property type="entry name" value="tRNA(m1g37)methyltransferase, domain 2"/>
    <property type="match status" value="1"/>
</dbReference>
<dbReference type="HAMAP" id="MF_00605">
    <property type="entry name" value="TrmD"/>
    <property type="match status" value="1"/>
</dbReference>
<dbReference type="InterPro" id="IPR029028">
    <property type="entry name" value="Alpha/beta_knot_MTases"/>
</dbReference>
<dbReference type="InterPro" id="IPR023148">
    <property type="entry name" value="tRNA_m1G_MeTrfase_C_sf"/>
</dbReference>
<dbReference type="InterPro" id="IPR002649">
    <property type="entry name" value="tRNA_m1G_MeTrfase_TrmD"/>
</dbReference>
<dbReference type="InterPro" id="IPR029026">
    <property type="entry name" value="tRNA_m1G_MTases_N"/>
</dbReference>
<dbReference type="InterPro" id="IPR016009">
    <property type="entry name" value="tRNA_MeTrfase_TRMD/TRM10"/>
</dbReference>
<dbReference type="NCBIfam" id="NF000648">
    <property type="entry name" value="PRK00026.1"/>
    <property type="match status" value="1"/>
</dbReference>
<dbReference type="NCBIfam" id="TIGR00088">
    <property type="entry name" value="trmD"/>
    <property type="match status" value="1"/>
</dbReference>
<dbReference type="PANTHER" id="PTHR46417">
    <property type="entry name" value="TRNA (GUANINE-N(1)-)-METHYLTRANSFERASE"/>
    <property type="match status" value="1"/>
</dbReference>
<dbReference type="PANTHER" id="PTHR46417:SF1">
    <property type="entry name" value="TRNA (GUANINE-N(1)-)-METHYLTRANSFERASE"/>
    <property type="match status" value="1"/>
</dbReference>
<dbReference type="Pfam" id="PF01746">
    <property type="entry name" value="tRNA_m1G_MT"/>
    <property type="match status" value="1"/>
</dbReference>
<dbReference type="PIRSF" id="PIRSF000386">
    <property type="entry name" value="tRNA_mtase"/>
    <property type="match status" value="1"/>
</dbReference>
<dbReference type="SUPFAM" id="SSF75217">
    <property type="entry name" value="alpha/beta knot"/>
    <property type="match status" value="1"/>
</dbReference>
<feature type="chain" id="PRO_1000198571" description="tRNA (guanine-N(1)-)-methyltransferase">
    <location>
        <begin position="1"/>
        <end position="255"/>
    </location>
</feature>
<feature type="binding site" evidence="1">
    <location>
        <position position="113"/>
    </location>
    <ligand>
        <name>S-adenosyl-L-methionine</name>
        <dbReference type="ChEBI" id="CHEBI:59789"/>
    </ligand>
</feature>
<feature type="binding site" evidence="1">
    <location>
        <begin position="133"/>
        <end position="138"/>
    </location>
    <ligand>
        <name>S-adenosyl-L-methionine</name>
        <dbReference type="ChEBI" id="CHEBI:59789"/>
    </ligand>
</feature>
<keyword id="KW-0963">Cytoplasm</keyword>
<keyword id="KW-0489">Methyltransferase</keyword>
<keyword id="KW-0949">S-adenosyl-L-methionine</keyword>
<keyword id="KW-0808">Transferase</keyword>
<keyword id="KW-0819">tRNA processing</keyword>
<protein>
    <recommendedName>
        <fullName evidence="1">tRNA (guanine-N(1)-)-methyltransferase</fullName>
        <ecNumber evidence="1">2.1.1.228</ecNumber>
    </recommendedName>
    <alternativeName>
        <fullName evidence="1">M1G-methyltransferase</fullName>
    </alternativeName>
    <alternativeName>
        <fullName evidence="1">tRNA [GM37] methyltransferase</fullName>
    </alternativeName>
</protein>
<gene>
    <name evidence="1" type="primary">trmD</name>
    <name type="ordered locus">ECED1_3046</name>
</gene>
<organism>
    <name type="scientific">Escherichia coli O81 (strain ED1a)</name>
    <dbReference type="NCBI Taxonomy" id="585397"/>
    <lineage>
        <taxon>Bacteria</taxon>
        <taxon>Pseudomonadati</taxon>
        <taxon>Pseudomonadota</taxon>
        <taxon>Gammaproteobacteria</taxon>
        <taxon>Enterobacterales</taxon>
        <taxon>Enterobacteriaceae</taxon>
        <taxon>Escherichia</taxon>
    </lineage>
</organism>
<comment type="function">
    <text evidence="1">Specifically methylates guanosine-37 in various tRNAs.</text>
</comment>
<comment type="catalytic activity">
    <reaction evidence="1">
        <text>guanosine(37) in tRNA + S-adenosyl-L-methionine = N(1)-methylguanosine(37) in tRNA + S-adenosyl-L-homocysteine + H(+)</text>
        <dbReference type="Rhea" id="RHEA:36899"/>
        <dbReference type="Rhea" id="RHEA-COMP:10145"/>
        <dbReference type="Rhea" id="RHEA-COMP:10147"/>
        <dbReference type="ChEBI" id="CHEBI:15378"/>
        <dbReference type="ChEBI" id="CHEBI:57856"/>
        <dbReference type="ChEBI" id="CHEBI:59789"/>
        <dbReference type="ChEBI" id="CHEBI:73542"/>
        <dbReference type="ChEBI" id="CHEBI:74269"/>
        <dbReference type="EC" id="2.1.1.228"/>
    </reaction>
</comment>
<comment type="subunit">
    <text evidence="1">Homodimer.</text>
</comment>
<comment type="subcellular location">
    <subcellularLocation>
        <location evidence="1">Cytoplasm</location>
    </subcellularLocation>
</comment>
<comment type="similarity">
    <text evidence="1">Belongs to the RNA methyltransferase TrmD family.</text>
</comment>
<proteinExistence type="inferred from homology"/>
<reference key="1">
    <citation type="journal article" date="2009" name="PLoS Genet.">
        <title>Organised genome dynamics in the Escherichia coli species results in highly diverse adaptive paths.</title>
        <authorList>
            <person name="Touchon M."/>
            <person name="Hoede C."/>
            <person name="Tenaillon O."/>
            <person name="Barbe V."/>
            <person name="Baeriswyl S."/>
            <person name="Bidet P."/>
            <person name="Bingen E."/>
            <person name="Bonacorsi S."/>
            <person name="Bouchier C."/>
            <person name="Bouvet O."/>
            <person name="Calteau A."/>
            <person name="Chiapello H."/>
            <person name="Clermont O."/>
            <person name="Cruveiller S."/>
            <person name="Danchin A."/>
            <person name="Diard M."/>
            <person name="Dossat C."/>
            <person name="Karoui M.E."/>
            <person name="Frapy E."/>
            <person name="Garry L."/>
            <person name="Ghigo J.M."/>
            <person name="Gilles A.M."/>
            <person name="Johnson J."/>
            <person name="Le Bouguenec C."/>
            <person name="Lescat M."/>
            <person name="Mangenot S."/>
            <person name="Martinez-Jehanne V."/>
            <person name="Matic I."/>
            <person name="Nassif X."/>
            <person name="Oztas S."/>
            <person name="Petit M.A."/>
            <person name="Pichon C."/>
            <person name="Rouy Z."/>
            <person name="Ruf C.S."/>
            <person name="Schneider D."/>
            <person name="Tourret J."/>
            <person name="Vacherie B."/>
            <person name="Vallenet D."/>
            <person name="Medigue C."/>
            <person name="Rocha E.P.C."/>
            <person name="Denamur E."/>
        </authorList>
    </citation>
    <scope>NUCLEOTIDE SEQUENCE [LARGE SCALE GENOMIC DNA]</scope>
    <source>
        <strain>ED1a</strain>
    </source>
</reference>
<sequence>MWIGIISLFPEMFRAITDYGVTGRAVKNGLLSIQSWSPRDFTHDRHRIVDDRPYGGGPGMLMMVQPLRDAIHAAKAAAGEGAKVIYLSPQGRKLDQAGVSELATNQKLILVCGRYEGIDERVIQTEIDEEWSIGDYVLSGGELPAMTLIDSVSRFIPGVLGHEASATEDSFAEGLLDCPHYTRPEVLEGMEVPPVLLSGNHAEIRRWRLKQSLGRTWLRRPELLENLALTEEQARLLAEFKTEHAQQQHKHDGMA</sequence>
<name>TRMD_ECO81</name>
<accession>B7MYA0</accession>